<comment type="catalytic activity">
    <reaction evidence="1">
        <text>tRNA(Lys) + L-lysine + ATP = L-lysyl-tRNA(Lys) + AMP + diphosphate</text>
        <dbReference type="Rhea" id="RHEA:20792"/>
        <dbReference type="Rhea" id="RHEA-COMP:9696"/>
        <dbReference type="Rhea" id="RHEA-COMP:9697"/>
        <dbReference type="ChEBI" id="CHEBI:30616"/>
        <dbReference type="ChEBI" id="CHEBI:32551"/>
        <dbReference type="ChEBI" id="CHEBI:33019"/>
        <dbReference type="ChEBI" id="CHEBI:78442"/>
        <dbReference type="ChEBI" id="CHEBI:78529"/>
        <dbReference type="ChEBI" id="CHEBI:456215"/>
        <dbReference type="EC" id="6.1.1.6"/>
    </reaction>
</comment>
<comment type="cofactor">
    <cofactor evidence="1">
        <name>Mg(2+)</name>
        <dbReference type="ChEBI" id="CHEBI:18420"/>
    </cofactor>
    <text evidence="1">Binds 3 Mg(2+) ions per subunit.</text>
</comment>
<comment type="subunit">
    <text evidence="1">Homodimer.</text>
</comment>
<comment type="subcellular location">
    <subcellularLocation>
        <location evidence="1">Cytoplasm</location>
    </subcellularLocation>
</comment>
<comment type="similarity">
    <text evidence="1">Belongs to the class-II aminoacyl-tRNA synthetase family.</text>
</comment>
<sequence length="513" mass="58338">MTEPTQPNAAQPNVVPEVDDNKIIAERREKLRELREQGVAYPNDFRPTHHAEDLQAQYEHSDKEALEANPLEVAIAGRMMLKRVMGKASFATVRDGSGQIQFFITPADVGQETYDAFKKWDMGDIVAARGVLFRTNKGELSVRCTELRLLSKSLRPLPDKFHGLSDQEMKYRQRYVDLIVTPETRKTFVARTKAISSIRKFMADADFMEVETPMLHPIPGGAAAKPFTTHHNALDMQMFLRIAPELYLKRLVVGGFERVFEINRNFRNEGVSVRHNPEFTMIEFYAAYTDYKWLMDFTEQLIRQAAIDALGTATITYQGRELDLAKPFHRLTITQAIQKYAPQYTNEQLADSAFLRTELKKFGVDASQPQFLNAGVGALQLALFEETAESQLWEPTYIIDYPIEVSPLARASDKVEGITERFELFITGREIANGFSELNDPEDQAARFRKQVDQKDAGDEEAMFYDADYIRALEYGMPPAGGCGIGIDRLVMLLTDSPSIRDVILFPHLRRED</sequence>
<protein>
    <recommendedName>
        <fullName evidence="1">Lysine--tRNA ligase</fullName>
        <ecNumber evidence="1">6.1.1.6</ecNumber>
    </recommendedName>
    <alternativeName>
        <fullName evidence="1">Lysyl-tRNA synthetase</fullName>
        <shortName evidence="1">LysRS</shortName>
    </alternativeName>
</protein>
<accession>Q13WZ5</accession>
<dbReference type="EC" id="6.1.1.6" evidence="1"/>
<dbReference type="EMBL" id="CP000270">
    <property type="protein sequence ID" value="ABE31394.1"/>
    <property type="molecule type" value="Genomic_DNA"/>
</dbReference>
<dbReference type="RefSeq" id="WP_011488973.1">
    <property type="nucleotide sequence ID" value="NC_007951.1"/>
</dbReference>
<dbReference type="SMR" id="Q13WZ5"/>
<dbReference type="STRING" id="266265.Bxe_A1561"/>
<dbReference type="KEGG" id="bxb:DR64_3722"/>
<dbReference type="KEGG" id="bxe:Bxe_A1561"/>
<dbReference type="PATRIC" id="fig|266265.5.peg.2998"/>
<dbReference type="eggNOG" id="COG1190">
    <property type="taxonomic scope" value="Bacteria"/>
</dbReference>
<dbReference type="OrthoDB" id="9801152at2"/>
<dbReference type="Proteomes" id="UP000001817">
    <property type="component" value="Chromosome 1"/>
</dbReference>
<dbReference type="GO" id="GO:0005829">
    <property type="term" value="C:cytosol"/>
    <property type="evidence" value="ECO:0007669"/>
    <property type="project" value="TreeGrafter"/>
</dbReference>
<dbReference type="GO" id="GO:0005524">
    <property type="term" value="F:ATP binding"/>
    <property type="evidence" value="ECO:0007669"/>
    <property type="project" value="UniProtKB-UniRule"/>
</dbReference>
<dbReference type="GO" id="GO:0004824">
    <property type="term" value="F:lysine-tRNA ligase activity"/>
    <property type="evidence" value="ECO:0007669"/>
    <property type="project" value="UniProtKB-UniRule"/>
</dbReference>
<dbReference type="GO" id="GO:0000287">
    <property type="term" value="F:magnesium ion binding"/>
    <property type="evidence" value="ECO:0007669"/>
    <property type="project" value="UniProtKB-UniRule"/>
</dbReference>
<dbReference type="GO" id="GO:0000049">
    <property type="term" value="F:tRNA binding"/>
    <property type="evidence" value="ECO:0007669"/>
    <property type="project" value="TreeGrafter"/>
</dbReference>
<dbReference type="GO" id="GO:0006430">
    <property type="term" value="P:lysyl-tRNA aminoacylation"/>
    <property type="evidence" value="ECO:0007669"/>
    <property type="project" value="UniProtKB-UniRule"/>
</dbReference>
<dbReference type="CDD" id="cd00775">
    <property type="entry name" value="LysRS_core"/>
    <property type="match status" value="1"/>
</dbReference>
<dbReference type="CDD" id="cd04322">
    <property type="entry name" value="LysRS_N"/>
    <property type="match status" value="1"/>
</dbReference>
<dbReference type="FunFam" id="2.40.50.140:FF:000024">
    <property type="entry name" value="Lysine--tRNA ligase"/>
    <property type="match status" value="1"/>
</dbReference>
<dbReference type="FunFam" id="3.30.930.10:FF:000001">
    <property type="entry name" value="Lysine--tRNA ligase"/>
    <property type="match status" value="1"/>
</dbReference>
<dbReference type="Gene3D" id="3.30.930.10">
    <property type="entry name" value="Bira Bifunctional Protein, Domain 2"/>
    <property type="match status" value="1"/>
</dbReference>
<dbReference type="Gene3D" id="2.40.50.140">
    <property type="entry name" value="Nucleic acid-binding proteins"/>
    <property type="match status" value="1"/>
</dbReference>
<dbReference type="HAMAP" id="MF_00252">
    <property type="entry name" value="Lys_tRNA_synth_class2"/>
    <property type="match status" value="1"/>
</dbReference>
<dbReference type="InterPro" id="IPR004364">
    <property type="entry name" value="Aa-tRNA-synt_II"/>
</dbReference>
<dbReference type="InterPro" id="IPR006195">
    <property type="entry name" value="aa-tRNA-synth_II"/>
</dbReference>
<dbReference type="InterPro" id="IPR045864">
    <property type="entry name" value="aa-tRNA-synth_II/BPL/LPL"/>
</dbReference>
<dbReference type="InterPro" id="IPR002313">
    <property type="entry name" value="Lys-tRNA-ligase_II"/>
</dbReference>
<dbReference type="InterPro" id="IPR044136">
    <property type="entry name" value="Lys-tRNA-ligase_II_N"/>
</dbReference>
<dbReference type="InterPro" id="IPR018149">
    <property type="entry name" value="Lys-tRNA-synth_II_C"/>
</dbReference>
<dbReference type="InterPro" id="IPR012340">
    <property type="entry name" value="NA-bd_OB-fold"/>
</dbReference>
<dbReference type="InterPro" id="IPR004365">
    <property type="entry name" value="NA-bd_OB_tRNA"/>
</dbReference>
<dbReference type="NCBIfam" id="TIGR00499">
    <property type="entry name" value="lysS_bact"/>
    <property type="match status" value="1"/>
</dbReference>
<dbReference type="NCBIfam" id="NF001756">
    <property type="entry name" value="PRK00484.1"/>
    <property type="match status" value="1"/>
</dbReference>
<dbReference type="PANTHER" id="PTHR42918:SF15">
    <property type="entry name" value="LYSINE--TRNA LIGASE, CHLOROPLASTIC_MITOCHONDRIAL"/>
    <property type="match status" value="1"/>
</dbReference>
<dbReference type="PANTHER" id="PTHR42918">
    <property type="entry name" value="LYSYL-TRNA SYNTHETASE"/>
    <property type="match status" value="1"/>
</dbReference>
<dbReference type="Pfam" id="PF00152">
    <property type="entry name" value="tRNA-synt_2"/>
    <property type="match status" value="1"/>
</dbReference>
<dbReference type="Pfam" id="PF01336">
    <property type="entry name" value="tRNA_anti-codon"/>
    <property type="match status" value="1"/>
</dbReference>
<dbReference type="PRINTS" id="PR00982">
    <property type="entry name" value="TRNASYNTHLYS"/>
</dbReference>
<dbReference type="SUPFAM" id="SSF55681">
    <property type="entry name" value="Class II aaRS and biotin synthetases"/>
    <property type="match status" value="1"/>
</dbReference>
<dbReference type="SUPFAM" id="SSF50249">
    <property type="entry name" value="Nucleic acid-binding proteins"/>
    <property type="match status" value="1"/>
</dbReference>
<dbReference type="PROSITE" id="PS50862">
    <property type="entry name" value="AA_TRNA_LIGASE_II"/>
    <property type="match status" value="1"/>
</dbReference>
<gene>
    <name evidence="1" type="primary">lysS</name>
    <name type="ordered locus">Bxeno_A2856</name>
    <name type="ORF">Bxe_A1561</name>
</gene>
<proteinExistence type="inferred from homology"/>
<name>SYK_PARXL</name>
<keyword id="KW-0030">Aminoacyl-tRNA synthetase</keyword>
<keyword id="KW-0067">ATP-binding</keyword>
<keyword id="KW-0963">Cytoplasm</keyword>
<keyword id="KW-0436">Ligase</keyword>
<keyword id="KW-0460">Magnesium</keyword>
<keyword id="KW-0479">Metal-binding</keyword>
<keyword id="KW-0547">Nucleotide-binding</keyword>
<keyword id="KW-0648">Protein biosynthesis</keyword>
<keyword id="KW-1185">Reference proteome</keyword>
<feature type="chain" id="PRO_1000101105" description="Lysine--tRNA ligase">
    <location>
        <begin position="1"/>
        <end position="513"/>
    </location>
</feature>
<feature type="region of interest" description="Disordered" evidence="2">
    <location>
        <begin position="1"/>
        <end position="22"/>
    </location>
</feature>
<feature type="compositionally biased region" description="Polar residues" evidence="2">
    <location>
        <begin position="1"/>
        <end position="11"/>
    </location>
</feature>
<feature type="binding site" evidence="1">
    <location>
        <position position="423"/>
    </location>
    <ligand>
        <name>Mg(2+)</name>
        <dbReference type="ChEBI" id="CHEBI:18420"/>
        <label>1</label>
    </ligand>
</feature>
<feature type="binding site" evidence="1">
    <location>
        <position position="430"/>
    </location>
    <ligand>
        <name>Mg(2+)</name>
        <dbReference type="ChEBI" id="CHEBI:18420"/>
        <label>1</label>
    </ligand>
</feature>
<feature type="binding site" evidence="1">
    <location>
        <position position="430"/>
    </location>
    <ligand>
        <name>Mg(2+)</name>
        <dbReference type="ChEBI" id="CHEBI:18420"/>
        <label>2</label>
    </ligand>
</feature>
<reference key="1">
    <citation type="journal article" date="2006" name="Proc. Natl. Acad. Sci. U.S.A.">
        <title>Burkholderia xenovorans LB400 harbors a multi-replicon, 9.73-Mbp genome shaped for versatility.</title>
        <authorList>
            <person name="Chain P.S.G."/>
            <person name="Denef V.J."/>
            <person name="Konstantinidis K.T."/>
            <person name="Vergez L.M."/>
            <person name="Agullo L."/>
            <person name="Reyes V.L."/>
            <person name="Hauser L."/>
            <person name="Cordova M."/>
            <person name="Gomez L."/>
            <person name="Gonzalez M."/>
            <person name="Land M."/>
            <person name="Lao V."/>
            <person name="Larimer F."/>
            <person name="LiPuma J.J."/>
            <person name="Mahenthiralingam E."/>
            <person name="Malfatti S.A."/>
            <person name="Marx C.J."/>
            <person name="Parnell J.J."/>
            <person name="Ramette A."/>
            <person name="Richardson P."/>
            <person name="Seeger M."/>
            <person name="Smith D."/>
            <person name="Spilker T."/>
            <person name="Sul W.J."/>
            <person name="Tsoi T.V."/>
            <person name="Ulrich L.E."/>
            <person name="Zhulin I.B."/>
            <person name="Tiedje J.M."/>
        </authorList>
    </citation>
    <scope>NUCLEOTIDE SEQUENCE [LARGE SCALE GENOMIC DNA]</scope>
    <source>
        <strain>LB400</strain>
    </source>
</reference>
<organism>
    <name type="scientific">Paraburkholderia xenovorans (strain LB400)</name>
    <dbReference type="NCBI Taxonomy" id="266265"/>
    <lineage>
        <taxon>Bacteria</taxon>
        <taxon>Pseudomonadati</taxon>
        <taxon>Pseudomonadota</taxon>
        <taxon>Betaproteobacteria</taxon>
        <taxon>Burkholderiales</taxon>
        <taxon>Burkholderiaceae</taxon>
        <taxon>Paraburkholderia</taxon>
    </lineage>
</organism>
<evidence type="ECO:0000255" key="1">
    <source>
        <dbReference type="HAMAP-Rule" id="MF_00252"/>
    </source>
</evidence>
<evidence type="ECO:0000256" key="2">
    <source>
        <dbReference type="SAM" id="MobiDB-lite"/>
    </source>
</evidence>